<sequence length="318" mass="35006">MNWISNYVRPRINSIFSRRETPENLWSKCSECGTMLFHRELSDNLNVCTNCDHHMALTPRDRFTALFDNGIFTQITVPEPLTDPLKFRDQKKYPDRMKAARTATSEAEAMLVAEGEMGRTPIVAAAQDFSFMGGSMGMFVGNAIIAAAERAVALKRPLILFSAAGGARMQEGILSLMQMPRTTVAVQMLKEANLPYIVVLTHPTTGGVTASYAMLGDVHIAEPNALICFAGPRVIEQTIREKLPEGFQRAEYLLDHGMLDRVTHRARMRDELITITRMLMGQTPAVKGELPAPAPLESDAETALASDTDPNGAPPSKD</sequence>
<reference key="1">
    <citation type="submission" date="2006-02" db="EMBL/GenBank/DDBJ databases">
        <title>Complete sequence of chromosome of Jannaschia sp. CCS1.</title>
        <authorList>
            <consortium name="US DOE Joint Genome Institute"/>
            <person name="Copeland A."/>
            <person name="Lucas S."/>
            <person name="Lapidus A."/>
            <person name="Barry K."/>
            <person name="Detter J.C."/>
            <person name="Glavina del Rio T."/>
            <person name="Hammon N."/>
            <person name="Israni S."/>
            <person name="Pitluck S."/>
            <person name="Brettin T."/>
            <person name="Bruce D."/>
            <person name="Han C."/>
            <person name="Tapia R."/>
            <person name="Gilna P."/>
            <person name="Chertkov O."/>
            <person name="Saunders E."/>
            <person name="Schmutz J."/>
            <person name="Larimer F."/>
            <person name="Land M."/>
            <person name="Kyrpides N."/>
            <person name="Lykidis A."/>
            <person name="Moran M.A."/>
            <person name="Belas R."/>
            <person name="Ye W."/>
            <person name="Buchan A."/>
            <person name="Gonzalez J.M."/>
            <person name="Schell M.A."/>
            <person name="Richardson P."/>
        </authorList>
    </citation>
    <scope>NUCLEOTIDE SEQUENCE [LARGE SCALE GENOMIC DNA]</scope>
    <source>
        <strain>CCS1</strain>
    </source>
</reference>
<dbReference type="EC" id="2.1.3.15" evidence="1"/>
<dbReference type="EMBL" id="CP000264">
    <property type="protein sequence ID" value="ABD52977.1"/>
    <property type="molecule type" value="Genomic_DNA"/>
</dbReference>
<dbReference type="RefSeq" id="WP_011453186.1">
    <property type="nucleotide sequence ID" value="NC_007802.1"/>
</dbReference>
<dbReference type="SMR" id="Q28WD5"/>
<dbReference type="STRING" id="290400.Jann_0060"/>
<dbReference type="KEGG" id="jan:Jann_0060"/>
<dbReference type="eggNOG" id="COG0777">
    <property type="taxonomic scope" value="Bacteria"/>
</dbReference>
<dbReference type="HOGENOM" id="CLU_015486_1_0_5"/>
<dbReference type="OrthoDB" id="9772975at2"/>
<dbReference type="UniPathway" id="UPA00655">
    <property type="reaction ID" value="UER00711"/>
</dbReference>
<dbReference type="Proteomes" id="UP000008326">
    <property type="component" value="Chromosome"/>
</dbReference>
<dbReference type="GO" id="GO:0009329">
    <property type="term" value="C:acetate CoA-transferase complex"/>
    <property type="evidence" value="ECO:0007669"/>
    <property type="project" value="TreeGrafter"/>
</dbReference>
<dbReference type="GO" id="GO:0003989">
    <property type="term" value="F:acetyl-CoA carboxylase activity"/>
    <property type="evidence" value="ECO:0007669"/>
    <property type="project" value="InterPro"/>
</dbReference>
<dbReference type="GO" id="GO:0005524">
    <property type="term" value="F:ATP binding"/>
    <property type="evidence" value="ECO:0007669"/>
    <property type="project" value="UniProtKB-KW"/>
</dbReference>
<dbReference type="GO" id="GO:0016743">
    <property type="term" value="F:carboxyl- or carbamoyltransferase activity"/>
    <property type="evidence" value="ECO:0007669"/>
    <property type="project" value="UniProtKB-UniRule"/>
</dbReference>
<dbReference type="GO" id="GO:0008270">
    <property type="term" value="F:zinc ion binding"/>
    <property type="evidence" value="ECO:0007669"/>
    <property type="project" value="UniProtKB-UniRule"/>
</dbReference>
<dbReference type="GO" id="GO:0006633">
    <property type="term" value="P:fatty acid biosynthetic process"/>
    <property type="evidence" value="ECO:0007669"/>
    <property type="project" value="UniProtKB-KW"/>
</dbReference>
<dbReference type="GO" id="GO:2001295">
    <property type="term" value="P:malonyl-CoA biosynthetic process"/>
    <property type="evidence" value="ECO:0007669"/>
    <property type="project" value="UniProtKB-UniRule"/>
</dbReference>
<dbReference type="Gene3D" id="3.90.226.10">
    <property type="entry name" value="2-enoyl-CoA Hydratase, Chain A, domain 1"/>
    <property type="match status" value="1"/>
</dbReference>
<dbReference type="HAMAP" id="MF_01395">
    <property type="entry name" value="AcetylCoA_CT_beta"/>
    <property type="match status" value="1"/>
</dbReference>
<dbReference type="InterPro" id="IPR034733">
    <property type="entry name" value="AcCoA_carboxyl_beta"/>
</dbReference>
<dbReference type="InterPro" id="IPR000438">
    <property type="entry name" value="Acetyl_CoA_COase_Trfase_b_su"/>
</dbReference>
<dbReference type="InterPro" id="IPR029045">
    <property type="entry name" value="ClpP/crotonase-like_dom_sf"/>
</dbReference>
<dbReference type="InterPro" id="IPR011762">
    <property type="entry name" value="COA_CT_N"/>
</dbReference>
<dbReference type="InterPro" id="IPR041010">
    <property type="entry name" value="Znf-ACC"/>
</dbReference>
<dbReference type="NCBIfam" id="TIGR00515">
    <property type="entry name" value="accD"/>
    <property type="match status" value="1"/>
</dbReference>
<dbReference type="PANTHER" id="PTHR42995">
    <property type="entry name" value="ACETYL-COENZYME A CARBOXYLASE CARBOXYL TRANSFERASE SUBUNIT BETA, CHLOROPLASTIC"/>
    <property type="match status" value="1"/>
</dbReference>
<dbReference type="PANTHER" id="PTHR42995:SF5">
    <property type="entry name" value="ACETYL-COENZYME A CARBOXYLASE CARBOXYL TRANSFERASE SUBUNIT BETA, CHLOROPLASTIC"/>
    <property type="match status" value="1"/>
</dbReference>
<dbReference type="Pfam" id="PF01039">
    <property type="entry name" value="Carboxyl_trans"/>
    <property type="match status" value="1"/>
</dbReference>
<dbReference type="Pfam" id="PF17848">
    <property type="entry name" value="Zn_ribbon_ACC"/>
    <property type="match status" value="1"/>
</dbReference>
<dbReference type="PRINTS" id="PR01070">
    <property type="entry name" value="ACCCTRFRASEB"/>
</dbReference>
<dbReference type="SUPFAM" id="SSF52096">
    <property type="entry name" value="ClpP/crotonase"/>
    <property type="match status" value="1"/>
</dbReference>
<dbReference type="PROSITE" id="PS50980">
    <property type="entry name" value="COA_CT_NTER"/>
    <property type="match status" value="1"/>
</dbReference>
<keyword id="KW-0067">ATP-binding</keyword>
<keyword id="KW-0963">Cytoplasm</keyword>
<keyword id="KW-0275">Fatty acid biosynthesis</keyword>
<keyword id="KW-0276">Fatty acid metabolism</keyword>
<keyword id="KW-0444">Lipid biosynthesis</keyword>
<keyword id="KW-0443">Lipid metabolism</keyword>
<keyword id="KW-0479">Metal-binding</keyword>
<keyword id="KW-0547">Nucleotide-binding</keyword>
<keyword id="KW-1185">Reference proteome</keyword>
<keyword id="KW-0808">Transferase</keyword>
<keyword id="KW-0862">Zinc</keyword>
<keyword id="KW-0863">Zinc-finger</keyword>
<name>ACCD_JANSC</name>
<comment type="function">
    <text evidence="1">Component of the acetyl coenzyme A carboxylase (ACC) complex. Biotin carboxylase (BC) catalyzes the carboxylation of biotin on its carrier protein (BCCP) and then the CO(2) group is transferred by the transcarboxylase to acetyl-CoA to form malonyl-CoA.</text>
</comment>
<comment type="catalytic activity">
    <reaction evidence="1">
        <text>N(6)-carboxybiotinyl-L-lysyl-[protein] + acetyl-CoA = N(6)-biotinyl-L-lysyl-[protein] + malonyl-CoA</text>
        <dbReference type="Rhea" id="RHEA:54728"/>
        <dbReference type="Rhea" id="RHEA-COMP:10505"/>
        <dbReference type="Rhea" id="RHEA-COMP:10506"/>
        <dbReference type="ChEBI" id="CHEBI:57288"/>
        <dbReference type="ChEBI" id="CHEBI:57384"/>
        <dbReference type="ChEBI" id="CHEBI:83144"/>
        <dbReference type="ChEBI" id="CHEBI:83145"/>
        <dbReference type="EC" id="2.1.3.15"/>
    </reaction>
</comment>
<comment type="cofactor">
    <cofactor evidence="1">
        <name>Zn(2+)</name>
        <dbReference type="ChEBI" id="CHEBI:29105"/>
    </cofactor>
    <text evidence="1">Binds 1 zinc ion per subunit.</text>
</comment>
<comment type="pathway">
    <text evidence="1">Lipid metabolism; malonyl-CoA biosynthesis; malonyl-CoA from acetyl-CoA: step 1/1.</text>
</comment>
<comment type="subunit">
    <text evidence="1">Acetyl-CoA carboxylase is a heterohexamer composed of biotin carboxyl carrier protein (AccB), biotin carboxylase (AccC) and two subunits each of ACCase subunit alpha (AccA) and ACCase subunit beta (AccD).</text>
</comment>
<comment type="subcellular location">
    <subcellularLocation>
        <location evidence="1">Cytoplasm</location>
    </subcellularLocation>
</comment>
<comment type="similarity">
    <text evidence="1">Belongs to the AccD/PCCB family.</text>
</comment>
<organism>
    <name type="scientific">Jannaschia sp. (strain CCS1)</name>
    <dbReference type="NCBI Taxonomy" id="290400"/>
    <lineage>
        <taxon>Bacteria</taxon>
        <taxon>Pseudomonadati</taxon>
        <taxon>Pseudomonadota</taxon>
        <taxon>Alphaproteobacteria</taxon>
        <taxon>Rhodobacterales</taxon>
        <taxon>Roseobacteraceae</taxon>
        <taxon>Jannaschia</taxon>
    </lineage>
</organism>
<protein>
    <recommendedName>
        <fullName evidence="1">Acetyl-coenzyme A carboxylase carboxyl transferase subunit beta</fullName>
        <shortName evidence="1">ACCase subunit beta</shortName>
        <shortName evidence="1">Acetyl-CoA carboxylase carboxyltransferase subunit beta</shortName>
        <ecNumber evidence="1">2.1.3.15</ecNumber>
    </recommendedName>
</protein>
<proteinExistence type="inferred from homology"/>
<feature type="chain" id="PRO_0000389759" description="Acetyl-coenzyme A carboxylase carboxyl transferase subunit beta">
    <location>
        <begin position="1"/>
        <end position="318"/>
    </location>
</feature>
<feature type="domain" description="CoA carboxyltransferase N-terminal" evidence="2">
    <location>
        <begin position="25"/>
        <end position="294"/>
    </location>
</feature>
<feature type="zinc finger region" description="C4-type" evidence="1">
    <location>
        <begin position="29"/>
        <end position="51"/>
    </location>
</feature>
<feature type="region of interest" description="Disordered" evidence="3">
    <location>
        <begin position="286"/>
        <end position="318"/>
    </location>
</feature>
<feature type="binding site" evidence="1">
    <location>
        <position position="29"/>
    </location>
    <ligand>
        <name>Zn(2+)</name>
        <dbReference type="ChEBI" id="CHEBI:29105"/>
    </ligand>
</feature>
<feature type="binding site" evidence="1">
    <location>
        <position position="32"/>
    </location>
    <ligand>
        <name>Zn(2+)</name>
        <dbReference type="ChEBI" id="CHEBI:29105"/>
    </ligand>
</feature>
<feature type="binding site" evidence="1">
    <location>
        <position position="48"/>
    </location>
    <ligand>
        <name>Zn(2+)</name>
        <dbReference type="ChEBI" id="CHEBI:29105"/>
    </ligand>
</feature>
<feature type="binding site" evidence="1">
    <location>
        <position position="51"/>
    </location>
    <ligand>
        <name>Zn(2+)</name>
        <dbReference type="ChEBI" id="CHEBI:29105"/>
    </ligand>
</feature>
<accession>Q28WD5</accession>
<evidence type="ECO:0000255" key="1">
    <source>
        <dbReference type="HAMAP-Rule" id="MF_01395"/>
    </source>
</evidence>
<evidence type="ECO:0000255" key="2">
    <source>
        <dbReference type="PROSITE-ProRule" id="PRU01136"/>
    </source>
</evidence>
<evidence type="ECO:0000256" key="3">
    <source>
        <dbReference type="SAM" id="MobiDB-lite"/>
    </source>
</evidence>
<gene>
    <name evidence="1" type="primary">accD</name>
    <name type="ordered locus">Jann_0060</name>
</gene>